<keyword id="KW-1185">Reference proteome</keyword>
<keyword id="KW-0687">Ribonucleoprotein</keyword>
<keyword id="KW-0689">Ribosomal protein</keyword>
<protein>
    <recommendedName>
        <fullName evidence="1">Small ribosomal subunit protein bS21</fullName>
    </recommendedName>
    <alternativeName>
        <fullName evidence="2">30S ribosomal protein S21</fullName>
    </alternativeName>
</protein>
<accession>Q1GYU5</accession>
<organism>
    <name type="scientific">Methylobacillus flagellatus (strain ATCC 51484 / DSM 6875 / VKM B-1610 / KT)</name>
    <dbReference type="NCBI Taxonomy" id="265072"/>
    <lineage>
        <taxon>Bacteria</taxon>
        <taxon>Pseudomonadati</taxon>
        <taxon>Pseudomonadota</taxon>
        <taxon>Betaproteobacteria</taxon>
        <taxon>Nitrosomonadales</taxon>
        <taxon>Methylophilaceae</taxon>
        <taxon>Methylobacillus</taxon>
    </lineage>
</organism>
<evidence type="ECO:0000255" key="1">
    <source>
        <dbReference type="HAMAP-Rule" id="MF_00358"/>
    </source>
</evidence>
<evidence type="ECO:0000305" key="2"/>
<sequence length="70" mass="8541">MSSVRVKENEPFDVALRRFKRMIEKTGLLTDLRAREYYEKPTWERKRKAAAAVKRHYRRIRSQTLPTKLY</sequence>
<reference key="1">
    <citation type="submission" date="2006-03" db="EMBL/GenBank/DDBJ databases">
        <title>Complete sequence of Methylobacillus flagellatus KT.</title>
        <authorList>
            <consortium name="US DOE Joint Genome Institute"/>
            <person name="Copeland A."/>
            <person name="Lucas S."/>
            <person name="Lapidus A."/>
            <person name="Barry K."/>
            <person name="Detter J.C."/>
            <person name="Glavina del Rio T."/>
            <person name="Hammon N."/>
            <person name="Israni S."/>
            <person name="Dalin E."/>
            <person name="Tice H."/>
            <person name="Pitluck S."/>
            <person name="Brettin T."/>
            <person name="Bruce D."/>
            <person name="Han C."/>
            <person name="Tapia R."/>
            <person name="Saunders E."/>
            <person name="Gilna P."/>
            <person name="Schmutz J."/>
            <person name="Larimer F."/>
            <person name="Land M."/>
            <person name="Kyrpides N."/>
            <person name="Anderson I."/>
            <person name="Richardson P."/>
        </authorList>
    </citation>
    <scope>NUCLEOTIDE SEQUENCE [LARGE SCALE GENOMIC DNA]</scope>
    <source>
        <strain>ATCC 51484 / DSM 6875 / VKM B-1610 / KT</strain>
    </source>
</reference>
<name>RS21_METFK</name>
<gene>
    <name evidence="1" type="primary">rpsU</name>
    <name type="ordered locus">Mfla_2325</name>
</gene>
<proteinExistence type="inferred from homology"/>
<feature type="chain" id="PRO_0000266705" description="Small ribosomal subunit protein bS21">
    <location>
        <begin position="1"/>
        <end position="70"/>
    </location>
</feature>
<dbReference type="EMBL" id="CP000284">
    <property type="protein sequence ID" value="ABE50592.1"/>
    <property type="molecule type" value="Genomic_DNA"/>
</dbReference>
<dbReference type="RefSeq" id="WP_011480545.1">
    <property type="nucleotide sequence ID" value="NC_007947.1"/>
</dbReference>
<dbReference type="SMR" id="Q1GYU5"/>
<dbReference type="STRING" id="265072.Mfla_2325"/>
<dbReference type="KEGG" id="mfa:Mfla_2325"/>
<dbReference type="eggNOG" id="COG0828">
    <property type="taxonomic scope" value="Bacteria"/>
</dbReference>
<dbReference type="HOGENOM" id="CLU_159258_1_2_4"/>
<dbReference type="OrthoDB" id="9799244at2"/>
<dbReference type="Proteomes" id="UP000002440">
    <property type="component" value="Chromosome"/>
</dbReference>
<dbReference type="GO" id="GO:1990904">
    <property type="term" value="C:ribonucleoprotein complex"/>
    <property type="evidence" value="ECO:0007669"/>
    <property type="project" value="UniProtKB-KW"/>
</dbReference>
<dbReference type="GO" id="GO:0005840">
    <property type="term" value="C:ribosome"/>
    <property type="evidence" value="ECO:0007669"/>
    <property type="project" value="UniProtKB-KW"/>
</dbReference>
<dbReference type="GO" id="GO:0003735">
    <property type="term" value="F:structural constituent of ribosome"/>
    <property type="evidence" value="ECO:0007669"/>
    <property type="project" value="InterPro"/>
</dbReference>
<dbReference type="GO" id="GO:0006412">
    <property type="term" value="P:translation"/>
    <property type="evidence" value="ECO:0007669"/>
    <property type="project" value="UniProtKB-UniRule"/>
</dbReference>
<dbReference type="Gene3D" id="1.20.5.1150">
    <property type="entry name" value="Ribosomal protein S8"/>
    <property type="match status" value="1"/>
</dbReference>
<dbReference type="HAMAP" id="MF_00358">
    <property type="entry name" value="Ribosomal_bS21"/>
    <property type="match status" value="1"/>
</dbReference>
<dbReference type="InterPro" id="IPR001911">
    <property type="entry name" value="Ribosomal_bS21"/>
</dbReference>
<dbReference type="InterPro" id="IPR018278">
    <property type="entry name" value="Ribosomal_bS21_CS"/>
</dbReference>
<dbReference type="InterPro" id="IPR038380">
    <property type="entry name" value="Ribosomal_bS21_sf"/>
</dbReference>
<dbReference type="NCBIfam" id="TIGR00030">
    <property type="entry name" value="S21p"/>
    <property type="match status" value="1"/>
</dbReference>
<dbReference type="PANTHER" id="PTHR21109">
    <property type="entry name" value="MITOCHONDRIAL 28S RIBOSOMAL PROTEIN S21"/>
    <property type="match status" value="1"/>
</dbReference>
<dbReference type="PANTHER" id="PTHR21109:SF22">
    <property type="entry name" value="SMALL RIBOSOMAL SUBUNIT PROTEIN BS21"/>
    <property type="match status" value="1"/>
</dbReference>
<dbReference type="Pfam" id="PF01165">
    <property type="entry name" value="Ribosomal_S21"/>
    <property type="match status" value="1"/>
</dbReference>
<dbReference type="PRINTS" id="PR00976">
    <property type="entry name" value="RIBOSOMALS21"/>
</dbReference>
<dbReference type="PROSITE" id="PS01181">
    <property type="entry name" value="RIBOSOMAL_S21"/>
    <property type="match status" value="1"/>
</dbReference>
<comment type="similarity">
    <text evidence="1">Belongs to the bacterial ribosomal protein bS21 family.</text>
</comment>